<gene>
    <name evidence="1" type="primary">nuoC</name>
    <name type="ordered locus">MAP_3203</name>
</gene>
<comment type="function">
    <text evidence="1">NDH-1 shuttles electrons from NADH, via FMN and iron-sulfur (Fe-S) centers, to quinones in the respiratory chain. The immediate electron acceptor for the enzyme in this species is believed to be a menaquinone. Couples the redox reaction to proton translocation (for every two electrons transferred, four hydrogen ions are translocated across the cytoplasmic membrane), and thus conserves the redox energy in a proton gradient.</text>
</comment>
<comment type="catalytic activity">
    <reaction evidence="1">
        <text>a quinone + NADH + 5 H(+)(in) = a quinol + NAD(+) + 4 H(+)(out)</text>
        <dbReference type="Rhea" id="RHEA:57888"/>
        <dbReference type="ChEBI" id="CHEBI:15378"/>
        <dbReference type="ChEBI" id="CHEBI:24646"/>
        <dbReference type="ChEBI" id="CHEBI:57540"/>
        <dbReference type="ChEBI" id="CHEBI:57945"/>
        <dbReference type="ChEBI" id="CHEBI:132124"/>
    </reaction>
</comment>
<comment type="subunit">
    <text evidence="1">NDH-1 is composed of 14 different subunits. Subunits NuoB, C, D, E, F, and G constitute the peripheral sector of the complex.</text>
</comment>
<comment type="subcellular location">
    <subcellularLocation>
        <location evidence="1">Cell membrane</location>
        <topology evidence="1">Peripheral membrane protein</topology>
        <orientation evidence="1">Cytoplasmic side</orientation>
    </subcellularLocation>
</comment>
<comment type="similarity">
    <text evidence="1">Belongs to the complex I 30 kDa subunit family.</text>
</comment>
<reference key="1">
    <citation type="journal article" date="2005" name="Proc. Natl. Acad. Sci. U.S.A.">
        <title>The complete genome sequence of Mycobacterium avium subspecies paratuberculosis.</title>
        <authorList>
            <person name="Li L."/>
            <person name="Bannantine J.P."/>
            <person name="Zhang Q."/>
            <person name="Amonsin A."/>
            <person name="May B.J."/>
            <person name="Alt D."/>
            <person name="Banerji N."/>
            <person name="Kanjilal S."/>
            <person name="Kapur V."/>
        </authorList>
    </citation>
    <scope>NUCLEOTIDE SEQUENCE [LARGE SCALE GENOMIC DNA]</scope>
    <source>
        <strain>ATCC BAA-968 / K-10</strain>
    </source>
</reference>
<organism>
    <name type="scientific">Mycolicibacterium paratuberculosis (strain ATCC BAA-968 / K-10)</name>
    <name type="common">Mycobacterium paratuberculosis</name>
    <dbReference type="NCBI Taxonomy" id="262316"/>
    <lineage>
        <taxon>Bacteria</taxon>
        <taxon>Bacillati</taxon>
        <taxon>Actinomycetota</taxon>
        <taxon>Actinomycetes</taxon>
        <taxon>Mycobacteriales</taxon>
        <taxon>Mycobacteriaceae</taxon>
        <taxon>Mycobacterium</taxon>
        <taxon>Mycobacterium avium complex (MAC)</taxon>
    </lineage>
</organism>
<dbReference type="EC" id="7.1.1.-" evidence="1"/>
<dbReference type="EMBL" id="AE016958">
    <property type="protein sequence ID" value="AAS05751.1"/>
    <property type="molecule type" value="Genomic_DNA"/>
</dbReference>
<dbReference type="RefSeq" id="WP_003874820.1">
    <property type="nucleotide sequence ID" value="NZ_CP106873.1"/>
</dbReference>
<dbReference type="SMR" id="Q73V13"/>
<dbReference type="STRING" id="262316.MAP_3203"/>
<dbReference type="KEGG" id="mpa:MAP_3203"/>
<dbReference type="eggNOG" id="COG0852">
    <property type="taxonomic scope" value="Bacteria"/>
</dbReference>
<dbReference type="HOGENOM" id="CLU_042628_4_0_11"/>
<dbReference type="Proteomes" id="UP000000580">
    <property type="component" value="Chromosome"/>
</dbReference>
<dbReference type="GO" id="GO:0005886">
    <property type="term" value="C:plasma membrane"/>
    <property type="evidence" value="ECO:0007669"/>
    <property type="project" value="UniProtKB-SubCell"/>
</dbReference>
<dbReference type="GO" id="GO:0008137">
    <property type="term" value="F:NADH dehydrogenase (ubiquinone) activity"/>
    <property type="evidence" value="ECO:0007669"/>
    <property type="project" value="InterPro"/>
</dbReference>
<dbReference type="GO" id="GO:0050136">
    <property type="term" value="F:NADH:ubiquinone reductase (non-electrogenic) activity"/>
    <property type="evidence" value="ECO:0007669"/>
    <property type="project" value="UniProtKB-UniRule"/>
</dbReference>
<dbReference type="GO" id="GO:0048038">
    <property type="term" value="F:quinone binding"/>
    <property type="evidence" value="ECO:0007669"/>
    <property type="project" value="UniProtKB-KW"/>
</dbReference>
<dbReference type="FunFam" id="3.30.460.80:FF:000006">
    <property type="entry name" value="NADH-quinone oxidoreductase subunit C"/>
    <property type="match status" value="1"/>
</dbReference>
<dbReference type="Gene3D" id="3.30.460.80">
    <property type="entry name" value="NADH:ubiquinone oxidoreductase, 30kDa subunit"/>
    <property type="match status" value="1"/>
</dbReference>
<dbReference type="HAMAP" id="MF_01357">
    <property type="entry name" value="NDH1_NuoC"/>
    <property type="match status" value="1"/>
</dbReference>
<dbReference type="InterPro" id="IPR010218">
    <property type="entry name" value="NADH_DH_suC"/>
</dbReference>
<dbReference type="InterPro" id="IPR037232">
    <property type="entry name" value="NADH_quin_OxRdtase_su_C/D-like"/>
</dbReference>
<dbReference type="InterPro" id="IPR001268">
    <property type="entry name" value="NADH_UbQ_OxRdtase_30kDa_su"/>
</dbReference>
<dbReference type="NCBIfam" id="TIGR01961">
    <property type="entry name" value="NuoC_fam"/>
    <property type="match status" value="1"/>
</dbReference>
<dbReference type="NCBIfam" id="NF005856">
    <property type="entry name" value="PRK07785.1"/>
    <property type="match status" value="1"/>
</dbReference>
<dbReference type="PANTHER" id="PTHR10884:SF14">
    <property type="entry name" value="NADH DEHYDROGENASE [UBIQUINONE] IRON-SULFUR PROTEIN 3, MITOCHONDRIAL"/>
    <property type="match status" value="1"/>
</dbReference>
<dbReference type="PANTHER" id="PTHR10884">
    <property type="entry name" value="NADH DEHYDROGENASE UBIQUINONE IRON-SULFUR PROTEIN 3"/>
    <property type="match status" value="1"/>
</dbReference>
<dbReference type="Pfam" id="PF00329">
    <property type="entry name" value="Complex1_30kDa"/>
    <property type="match status" value="1"/>
</dbReference>
<dbReference type="SUPFAM" id="SSF143243">
    <property type="entry name" value="Nqo5-like"/>
    <property type="match status" value="1"/>
</dbReference>
<keyword id="KW-1003">Cell membrane</keyword>
<keyword id="KW-0472">Membrane</keyword>
<keyword id="KW-0520">NAD</keyword>
<keyword id="KW-0874">Quinone</keyword>
<keyword id="KW-1185">Reference proteome</keyword>
<keyword id="KW-1278">Translocase</keyword>
<keyword id="KW-0813">Transport</keyword>
<accession>Q73V13</accession>
<proteinExistence type="inferred from homology"/>
<feature type="chain" id="PRO_0000358136" description="NADH-quinone oxidoreductase subunit C">
    <location>
        <begin position="1"/>
        <end position="235"/>
    </location>
</feature>
<sequence>MSSPDQDPREAIAQGDDEVIDVRRGMFGAAGTGDTSGYGRLVRTVTLPGSSPRPYGSYFDDVVDTLTESLQSNGIEFHQAIEKVVVYRDELTLHVDRAALPHVAQHLRDDPRLRFEMCLGVSGVHYPHETGRELHAVYPLQSITHNRRVRLEVAVPDEDPHIPSLYRIYPTTDWHERETYDFFGIVFDGHPSLTRIEMPDDWHGHPQRKDYPLGGIPVEYKGAQIPPPDERRAYN</sequence>
<evidence type="ECO:0000255" key="1">
    <source>
        <dbReference type="HAMAP-Rule" id="MF_01357"/>
    </source>
</evidence>
<name>NUOC_MYCPA</name>
<protein>
    <recommendedName>
        <fullName evidence="1">NADH-quinone oxidoreductase subunit C</fullName>
        <ecNumber evidence="1">7.1.1.-</ecNumber>
    </recommendedName>
    <alternativeName>
        <fullName evidence="1">NADH dehydrogenase I subunit C</fullName>
    </alternativeName>
    <alternativeName>
        <fullName evidence="1">NDH-1 subunit C</fullName>
    </alternativeName>
</protein>